<accession>A6VIE7</accession>
<protein>
    <recommendedName>
        <fullName evidence="1">DNA-binding protein MmarC7_1157</fullName>
    </recommendedName>
</protein>
<dbReference type="EMBL" id="CP000745">
    <property type="protein sequence ID" value="ABR66223.1"/>
    <property type="molecule type" value="Genomic_DNA"/>
</dbReference>
<dbReference type="SMR" id="A6VIE7"/>
<dbReference type="STRING" id="426368.MmarC7_1157"/>
<dbReference type="KEGG" id="mmz:MmarC7_1157"/>
<dbReference type="eggNOG" id="arCOG04179">
    <property type="taxonomic scope" value="Archaea"/>
</dbReference>
<dbReference type="HOGENOM" id="CLU_122978_3_0_2"/>
<dbReference type="OrthoDB" id="7912at2157"/>
<dbReference type="GO" id="GO:0005829">
    <property type="term" value="C:cytosol"/>
    <property type="evidence" value="ECO:0007669"/>
    <property type="project" value="TreeGrafter"/>
</dbReference>
<dbReference type="GO" id="GO:0003677">
    <property type="term" value="F:DNA binding"/>
    <property type="evidence" value="ECO:0007669"/>
    <property type="project" value="UniProtKB-UniRule"/>
</dbReference>
<dbReference type="Gene3D" id="1.10.8.140">
    <property type="entry name" value="PDCD5-like"/>
    <property type="match status" value="1"/>
</dbReference>
<dbReference type="HAMAP" id="MF_00026">
    <property type="entry name" value="dsDNA_bind"/>
    <property type="match status" value="1"/>
</dbReference>
<dbReference type="InterPro" id="IPR022889">
    <property type="entry name" value="DNA_bind_arc"/>
</dbReference>
<dbReference type="InterPro" id="IPR002836">
    <property type="entry name" value="PDCD5-like"/>
</dbReference>
<dbReference type="InterPro" id="IPR036883">
    <property type="entry name" value="PDCD5-like_sf"/>
</dbReference>
<dbReference type="NCBIfam" id="NF003268">
    <property type="entry name" value="PRK04239.1"/>
    <property type="match status" value="1"/>
</dbReference>
<dbReference type="PANTHER" id="PTHR10840">
    <property type="entry name" value="PROGRAMMED CELL DEATH PROTEIN 5"/>
    <property type="match status" value="1"/>
</dbReference>
<dbReference type="PANTHER" id="PTHR10840:SF0">
    <property type="entry name" value="PROGRAMMED CELL DEATH PROTEIN 5"/>
    <property type="match status" value="1"/>
</dbReference>
<dbReference type="Pfam" id="PF01984">
    <property type="entry name" value="dsDNA_bind"/>
    <property type="match status" value="1"/>
</dbReference>
<dbReference type="PIRSF" id="PIRSF015730">
    <property type="entry name" value="TFAR19"/>
    <property type="match status" value="1"/>
</dbReference>
<dbReference type="SUPFAM" id="SSF46950">
    <property type="entry name" value="Double-stranded DNA-binding domain"/>
    <property type="match status" value="1"/>
</dbReference>
<reference key="1">
    <citation type="submission" date="2007-06" db="EMBL/GenBank/DDBJ databases">
        <title>Complete sequence of Methanococcus maripaludis C7.</title>
        <authorList>
            <consortium name="US DOE Joint Genome Institute"/>
            <person name="Copeland A."/>
            <person name="Lucas S."/>
            <person name="Lapidus A."/>
            <person name="Barry K."/>
            <person name="Glavina del Rio T."/>
            <person name="Dalin E."/>
            <person name="Tice H."/>
            <person name="Pitluck S."/>
            <person name="Clum A."/>
            <person name="Schmutz J."/>
            <person name="Larimer F."/>
            <person name="Land M."/>
            <person name="Hauser L."/>
            <person name="Kyrpides N."/>
            <person name="Anderson I."/>
            <person name="Sieprawska-Lupa M."/>
            <person name="Whitman W.B."/>
            <person name="Richardson P."/>
        </authorList>
    </citation>
    <scope>NUCLEOTIDE SEQUENCE [LARGE SCALE GENOMIC DNA]</scope>
    <source>
        <strain>C7 / ATCC BAA-1331</strain>
    </source>
</reference>
<feature type="chain" id="PRO_1000002199" description="DNA-binding protein MmarC7_1157">
    <location>
        <begin position="1"/>
        <end position="119"/>
    </location>
</feature>
<feature type="region of interest" description="Disordered" evidence="2">
    <location>
        <begin position="1"/>
        <end position="37"/>
    </location>
</feature>
<feature type="compositionally biased region" description="Basic and acidic residues" evidence="2">
    <location>
        <begin position="1"/>
        <end position="12"/>
    </location>
</feature>
<name>Y1157_METM7</name>
<sequence>MNPEEIRQRRLQEMQAKAQEQGAANDPEAQRQAQEQQMQYEMQKQKILRQILSEDARSRLARIKLAKPQFAEQVEMQLIQLAQAGKLPIPLTDEYFKGLLDRIYEMNKPAKKEITIMRR</sequence>
<keyword id="KW-0238">DNA-binding</keyword>
<proteinExistence type="inferred from homology"/>
<organism>
    <name type="scientific">Methanococcus maripaludis (strain C7 / ATCC BAA-1331)</name>
    <dbReference type="NCBI Taxonomy" id="426368"/>
    <lineage>
        <taxon>Archaea</taxon>
        <taxon>Methanobacteriati</taxon>
        <taxon>Methanobacteriota</taxon>
        <taxon>Methanomada group</taxon>
        <taxon>Methanococci</taxon>
        <taxon>Methanococcales</taxon>
        <taxon>Methanococcaceae</taxon>
        <taxon>Methanococcus</taxon>
    </lineage>
</organism>
<comment type="similarity">
    <text evidence="1">Belongs to the PDCD5 family.</text>
</comment>
<gene>
    <name type="ordered locus">MmarC7_1157</name>
</gene>
<evidence type="ECO:0000255" key="1">
    <source>
        <dbReference type="HAMAP-Rule" id="MF_00026"/>
    </source>
</evidence>
<evidence type="ECO:0000256" key="2">
    <source>
        <dbReference type="SAM" id="MobiDB-lite"/>
    </source>
</evidence>